<comment type="function">
    <text evidence="1">One of the components of the core complex of photosystem II (PSII). PSII is a light-driven water:plastoquinone oxidoreductase that uses light energy to abstract electrons from H(2)O, generating O(2) and a proton gradient subsequently used for ATP formation. It consists of a core antenna complex that captures photons, and an electron transfer chain that converts photonic excitation into a charge separation.</text>
</comment>
<comment type="subunit">
    <text evidence="1">PSII is composed of 1 copy each of membrane proteins PsbA, PsbB, PsbC, PsbD, PsbE, PsbF, PsbH, PsbI, PsbJ, PsbK, PsbL, PsbM, PsbT, PsbX, PsbY, PsbZ, Psb30/Ycf12, peripheral proteins PsbO, CyanoQ (PsbQ), PsbU, PsbV and a large number of cofactors. It forms dimeric complexes.</text>
</comment>
<comment type="subcellular location">
    <subcellularLocation>
        <location evidence="1">Cellular thylakoid membrane</location>
        <topology evidence="1">Single-pass membrane protein</topology>
    </subcellularLocation>
</comment>
<comment type="similarity">
    <text evidence="1">Belongs to the PsbJ family.</text>
</comment>
<feature type="chain" id="PRO_0000292238" description="Photosystem II reaction center protein J">
    <location>
        <begin position="1"/>
        <end position="39"/>
    </location>
</feature>
<feature type="transmembrane region" description="Helical" evidence="1">
    <location>
        <begin position="7"/>
        <end position="27"/>
    </location>
</feature>
<proteinExistence type="inferred from homology"/>
<name>PSBJ_SYNJB</name>
<reference key="1">
    <citation type="journal article" date="2007" name="ISME J.">
        <title>Population level functional diversity in a microbial community revealed by comparative genomic and metagenomic analyses.</title>
        <authorList>
            <person name="Bhaya D."/>
            <person name="Grossman A.R."/>
            <person name="Steunou A.-S."/>
            <person name="Khuri N."/>
            <person name="Cohan F.M."/>
            <person name="Hamamura N."/>
            <person name="Melendrez M.C."/>
            <person name="Bateson M.M."/>
            <person name="Ward D.M."/>
            <person name="Heidelberg J.F."/>
        </authorList>
    </citation>
    <scope>NUCLEOTIDE SEQUENCE [LARGE SCALE GENOMIC DNA]</scope>
    <source>
        <strain>JA-2-3B'a(2-13)</strain>
    </source>
</reference>
<evidence type="ECO:0000255" key="1">
    <source>
        <dbReference type="HAMAP-Rule" id="MF_01305"/>
    </source>
</evidence>
<sequence length="39" mass="4043">MTSQARIPLWIVAVVAGLGVITVVGLFFYGSYVGLGSSL</sequence>
<gene>
    <name evidence="1" type="primary">psbJ</name>
    <name type="ordered locus">CYB_1498</name>
</gene>
<organism>
    <name type="scientific">Synechococcus sp. (strain JA-2-3B'a(2-13))</name>
    <name type="common">Cyanobacteria bacterium Yellowstone B-Prime</name>
    <dbReference type="NCBI Taxonomy" id="321332"/>
    <lineage>
        <taxon>Bacteria</taxon>
        <taxon>Bacillati</taxon>
        <taxon>Cyanobacteriota</taxon>
        <taxon>Cyanophyceae</taxon>
        <taxon>Synechococcales</taxon>
        <taxon>Synechococcaceae</taxon>
        <taxon>Synechococcus</taxon>
    </lineage>
</organism>
<protein>
    <recommendedName>
        <fullName evidence="1">Photosystem II reaction center protein J</fullName>
        <shortName evidence="1">PSII-J</shortName>
    </recommendedName>
</protein>
<keyword id="KW-0472">Membrane</keyword>
<keyword id="KW-0602">Photosynthesis</keyword>
<keyword id="KW-0604">Photosystem II</keyword>
<keyword id="KW-0674">Reaction center</keyword>
<keyword id="KW-1185">Reference proteome</keyword>
<keyword id="KW-0793">Thylakoid</keyword>
<keyword id="KW-0812">Transmembrane</keyword>
<keyword id="KW-1133">Transmembrane helix</keyword>
<dbReference type="EMBL" id="CP000240">
    <property type="protein sequence ID" value="ABD02464.1"/>
    <property type="molecule type" value="Genomic_DNA"/>
</dbReference>
<dbReference type="RefSeq" id="WP_011433112.1">
    <property type="nucleotide sequence ID" value="NC_007776.1"/>
</dbReference>
<dbReference type="SMR" id="Q2JLE7"/>
<dbReference type="STRING" id="321332.CYB_1498"/>
<dbReference type="KEGG" id="cyb:CYB_1498"/>
<dbReference type="eggNOG" id="ENOG5033ABP">
    <property type="taxonomic scope" value="Bacteria"/>
</dbReference>
<dbReference type="HOGENOM" id="CLU_215151_0_0_3"/>
<dbReference type="OrthoDB" id="466474at2"/>
<dbReference type="Proteomes" id="UP000001938">
    <property type="component" value="Chromosome"/>
</dbReference>
<dbReference type="GO" id="GO:0009539">
    <property type="term" value="C:photosystem II reaction center"/>
    <property type="evidence" value="ECO:0007669"/>
    <property type="project" value="InterPro"/>
</dbReference>
<dbReference type="GO" id="GO:0031676">
    <property type="term" value="C:plasma membrane-derived thylakoid membrane"/>
    <property type="evidence" value="ECO:0007669"/>
    <property type="project" value="UniProtKB-SubCell"/>
</dbReference>
<dbReference type="GO" id="GO:0015979">
    <property type="term" value="P:photosynthesis"/>
    <property type="evidence" value="ECO:0007669"/>
    <property type="project" value="UniProtKB-UniRule"/>
</dbReference>
<dbReference type="Gene3D" id="6.10.250.2070">
    <property type="match status" value="1"/>
</dbReference>
<dbReference type="HAMAP" id="MF_01305">
    <property type="entry name" value="PSII_PsbJ"/>
    <property type="match status" value="1"/>
</dbReference>
<dbReference type="InterPro" id="IPR002682">
    <property type="entry name" value="PSII_PsbJ"/>
</dbReference>
<dbReference type="InterPro" id="IPR037267">
    <property type="entry name" value="PSII_PsbJ_sf"/>
</dbReference>
<dbReference type="NCBIfam" id="NF002722">
    <property type="entry name" value="PRK02565.1"/>
    <property type="match status" value="1"/>
</dbReference>
<dbReference type="PANTHER" id="PTHR34812">
    <property type="entry name" value="PHOTOSYSTEM II REACTION CENTER PROTEIN J"/>
    <property type="match status" value="1"/>
</dbReference>
<dbReference type="PANTHER" id="PTHR34812:SF3">
    <property type="entry name" value="PHOTOSYSTEM II REACTION CENTER PROTEIN J"/>
    <property type="match status" value="1"/>
</dbReference>
<dbReference type="Pfam" id="PF01788">
    <property type="entry name" value="PsbJ"/>
    <property type="match status" value="1"/>
</dbReference>
<dbReference type="SUPFAM" id="SSF161021">
    <property type="entry name" value="Photosystem II reaction center protein J, PsbJ"/>
    <property type="match status" value="1"/>
</dbReference>
<accession>Q2JLE7</accession>